<comment type="function">
    <text evidence="1">Activates expression of the rhaBAD and rhaT operons.</text>
</comment>
<comment type="subunit">
    <text evidence="1">Binds DNA as a dimer.</text>
</comment>
<comment type="subcellular location">
    <subcellularLocation>
        <location evidence="1">Cytoplasm</location>
    </subcellularLocation>
</comment>
<organism>
    <name type="scientific">Escherichia coli (strain K12 / MC4100 / BW2952)</name>
    <dbReference type="NCBI Taxonomy" id="595496"/>
    <lineage>
        <taxon>Bacteria</taxon>
        <taxon>Pseudomonadati</taxon>
        <taxon>Pseudomonadota</taxon>
        <taxon>Gammaproteobacteria</taxon>
        <taxon>Enterobacterales</taxon>
        <taxon>Enterobacteriaceae</taxon>
        <taxon>Escherichia</taxon>
    </lineage>
</organism>
<evidence type="ECO:0000255" key="1">
    <source>
        <dbReference type="HAMAP-Rule" id="MF_01534"/>
    </source>
</evidence>
<protein>
    <recommendedName>
        <fullName evidence="1">HTH-type transcriptional activator RhaS</fullName>
    </recommendedName>
    <alternativeName>
        <fullName evidence="1">L-rhamnose operon regulatory protein RhaS</fullName>
    </alternativeName>
</protein>
<proteinExistence type="inferred from homology"/>
<keyword id="KW-0010">Activator</keyword>
<keyword id="KW-0963">Cytoplasm</keyword>
<keyword id="KW-0238">DNA-binding</keyword>
<keyword id="KW-0677">Repeat</keyword>
<keyword id="KW-0684">Rhamnose metabolism</keyword>
<keyword id="KW-0804">Transcription</keyword>
<keyword id="KW-0805">Transcription regulation</keyword>
<reference key="1">
    <citation type="journal article" date="2009" name="J. Bacteriol.">
        <title>Genomic sequencing reveals regulatory mutations and recombinational events in the widely used MC4100 lineage of Escherichia coli K-12.</title>
        <authorList>
            <person name="Ferenci T."/>
            <person name="Zhou Z."/>
            <person name="Betteridge T."/>
            <person name="Ren Y."/>
            <person name="Liu Y."/>
            <person name="Feng L."/>
            <person name="Reeves P.R."/>
            <person name="Wang L."/>
        </authorList>
    </citation>
    <scope>NUCLEOTIDE SEQUENCE [LARGE SCALE GENOMIC DNA]</scope>
    <source>
        <strain>K12 / MC4100 / BW2952</strain>
    </source>
</reference>
<dbReference type="EMBL" id="CP001396">
    <property type="protein sequence ID" value="ACR62907.1"/>
    <property type="molecule type" value="Genomic_DNA"/>
</dbReference>
<dbReference type="RefSeq" id="WP_000217137.1">
    <property type="nucleotide sequence ID" value="NC_012759.1"/>
</dbReference>
<dbReference type="SMR" id="C5A073"/>
<dbReference type="GeneID" id="75204579"/>
<dbReference type="KEGG" id="ebw:BWG_3575"/>
<dbReference type="HOGENOM" id="CLU_000445_88_5_6"/>
<dbReference type="GO" id="GO:0005737">
    <property type="term" value="C:cytoplasm"/>
    <property type="evidence" value="ECO:0007669"/>
    <property type="project" value="UniProtKB-SubCell"/>
</dbReference>
<dbReference type="GO" id="GO:0003700">
    <property type="term" value="F:DNA-binding transcription factor activity"/>
    <property type="evidence" value="ECO:0007669"/>
    <property type="project" value="UniProtKB-UniRule"/>
</dbReference>
<dbReference type="GO" id="GO:0043565">
    <property type="term" value="F:sequence-specific DNA binding"/>
    <property type="evidence" value="ECO:0007669"/>
    <property type="project" value="InterPro"/>
</dbReference>
<dbReference type="GO" id="GO:0045893">
    <property type="term" value="P:positive regulation of DNA-templated transcription"/>
    <property type="evidence" value="ECO:0007669"/>
    <property type="project" value="UniProtKB-UniRule"/>
</dbReference>
<dbReference type="GO" id="GO:0019299">
    <property type="term" value="P:rhamnose metabolic process"/>
    <property type="evidence" value="ECO:0007669"/>
    <property type="project" value="UniProtKB-UniRule"/>
</dbReference>
<dbReference type="CDD" id="cd06977">
    <property type="entry name" value="cupin_RhaR_RhaS-like_N"/>
    <property type="match status" value="1"/>
</dbReference>
<dbReference type="FunFam" id="1.10.10.60:FF:000181">
    <property type="entry name" value="HTH-type transcriptional activator RhaS"/>
    <property type="match status" value="1"/>
</dbReference>
<dbReference type="FunFam" id="2.60.120.10:FF:000041">
    <property type="entry name" value="HTH-type transcriptional activator RhaS"/>
    <property type="match status" value="1"/>
</dbReference>
<dbReference type="Gene3D" id="1.10.10.60">
    <property type="entry name" value="Homeodomain-like"/>
    <property type="match status" value="1"/>
</dbReference>
<dbReference type="Gene3D" id="2.60.120.10">
    <property type="entry name" value="Jelly Rolls"/>
    <property type="match status" value="1"/>
</dbReference>
<dbReference type="HAMAP" id="MF_01534">
    <property type="entry name" value="HTH_type_RhaS"/>
    <property type="match status" value="1"/>
</dbReference>
<dbReference type="InterPro" id="IPR003313">
    <property type="entry name" value="AraC-bd"/>
</dbReference>
<dbReference type="InterPro" id="IPR050204">
    <property type="entry name" value="AraC_XylS_family_regulators"/>
</dbReference>
<dbReference type="InterPro" id="IPR009057">
    <property type="entry name" value="Homeodomain-like_sf"/>
</dbReference>
<dbReference type="InterPro" id="IPR037923">
    <property type="entry name" value="HTH-like"/>
</dbReference>
<dbReference type="InterPro" id="IPR018060">
    <property type="entry name" value="HTH_AraC"/>
</dbReference>
<dbReference type="InterPro" id="IPR018062">
    <property type="entry name" value="HTH_AraC-typ_CS"/>
</dbReference>
<dbReference type="InterPro" id="IPR047220">
    <property type="entry name" value="RhaR_RhaS-like_N"/>
</dbReference>
<dbReference type="InterPro" id="IPR014710">
    <property type="entry name" value="RmlC-like_jellyroll"/>
</dbReference>
<dbReference type="InterPro" id="IPR020449">
    <property type="entry name" value="Tscrpt_reg_AraC-type_HTH"/>
</dbReference>
<dbReference type="InterPro" id="IPR023609">
    <property type="entry name" value="Tscrpt_reg_HTH_RhaS"/>
</dbReference>
<dbReference type="NCBIfam" id="NF010028">
    <property type="entry name" value="PRK13503.1"/>
    <property type="match status" value="1"/>
</dbReference>
<dbReference type="PANTHER" id="PTHR46796:SF13">
    <property type="entry name" value="HTH-TYPE TRANSCRIPTIONAL ACTIVATOR RHAS"/>
    <property type="match status" value="1"/>
</dbReference>
<dbReference type="PANTHER" id="PTHR46796">
    <property type="entry name" value="HTH-TYPE TRANSCRIPTIONAL ACTIVATOR RHAS-RELATED"/>
    <property type="match status" value="1"/>
</dbReference>
<dbReference type="Pfam" id="PF02311">
    <property type="entry name" value="AraC_binding"/>
    <property type="match status" value="1"/>
</dbReference>
<dbReference type="Pfam" id="PF12833">
    <property type="entry name" value="HTH_18"/>
    <property type="match status" value="1"/>
</dbReference>
<dbReference type="PRINTS" id="PR00032">
    <property type="entry name" value="HTHARAC"/>
</dbReference>
<dbReference type="SMART" id="SM00342">
    <property type="entry name" value="HTH_ARAC"/>
    <property type="match status" value="1"/>
</dbReference>
<dbReference type="SUPFAM" id="SSF46689">
    <property type="entry name" value="Homeodomain-like"/>
    <property type="match status" value="2"/>
</dbReference>
<dbReference type="SUPFAM" id="SSF51215">
    <property type="entry name" value="Regulatory protein AraC"/>
    <property type="match status" value="1"/>
</dbReference>
<dbReference type="PROSITE" id="PS00041">
    <property type="entry name" value="HTH_ARAC_FAMILY_1"/>
    <property type="match status" value="1"/>
</dbReference>
<dbReference type="PROSITE" id="PS01124">
    <property type="entry name" value="HTH_ARAC_FAMILY_2"/>
    <property type="match status" value="1"/>
</dbReference>
<gene>
    <name evidence="1" type="primary">rhaS</name>
    <name type="ordered locus">BWG_3575</name>
</gene>
<feature type="chain" id="PRO_1000215404" description="HTH-type transcriptional activator RhaS">
    <location>
        <begin position="1"/>
        <end position="278"/>
    </location>
</feature>
<feature type="domain" description="HTH araC/xylS-type" evidence="1">
    <location>
        <begin position="174"/>
        <end position="272"/>
    </location>
</feature>
<feature type="DNA-binding region" description="H-T-H motif" evidence="1">
    <location>
        <begin position="191"/>
        <end position="212"/>
    </location>
</feature>
<feature type="DNA-binding region" description="H-T-H motif" evidence="1">
    <location>
        <begin position="239"/>
        <end position="262"/>
    </location>
</feature>
<feature type="site" description="Interaction with sigma-70" evidence="1">
    <location>
        <position position="241"/>
    </location>
</feature>
<feature type="site" description="Interaction with sigma-70" evidence="1">
    <location>
        <position position="250"/>
    </location>
</feature>
<sequence>MTVLHSVDFFPSGNASVAIEPRLPQADFPEHHHDFHEIVIVEHGTGIHVFNGQPYTITGGTVCFVRDHDRHLYEHTDNLCLTNVLYRSPDRFQFLAGLNQLLPQELDGQYPSHWRVNHSVLQQVRQLVAQMEQQEGENDLPSTASREILFMQLLLLLRKSSLQENLENSASRLNLLLAWLEDHFADEVNWDAVADQFSLSLRTLHRQLKQQTGLTPQRYLNRLRLMKARHLLRHSEASVTDIAYRCGFSDSNHFSTLFRREFNWSPRDIRQGRDGFLQ</sequence>
<name>RHAS_ECOBW</name>
<accession>C5A073</accession>